<proteinExistence type="inferred from homology"/>
<reference key="1">
    <citation type="submission" date="2007-11" db="EMBL/GenBank/DDBJ databases">
        <authorList>
            <consortium name="The Salmonella enterica serovar Arizonae Genome Sequencing Project"/>
            <person name="McClelland M."/>
            <person name="Sanderson E.K."/>
            <person name="Porwollik S."/>
            <person name="Spieth J."/>
            <person name="Clifton W.S."/>
            <person name="Fulton R."/>
            <person name="Chunyan W."/>
            <person name="Wollam A."/>
            <person name="Shah N."/>
            <person name="Pepin K."/>
            <person name="Bhonagiri V."/>
            <person name="Nash W."/>
            <person name="Johnson M."/>
            <person name="Thiruvilangam P."/>
            <person name="Wilson R."/>
        </authorList>
    </citation>
    <scope>NUCLEOTIDE SEQUENCE [LARGE SCALE GENOMIC DNA]</scope>
    <source>
        <strain>ATCC BAA-731 / CDC346-86 / RSK2980</strain>
    </source>
</reference>
<gene>
    <name evidence="1" type="primary">bamA</name>
    <name type="synonym">yaeT</name>
    <name type="ordered locus">SARI_02778</name>
</gene>
<organism>
    <name type="scientific">Salmonella arizonae (strain ATCC BAA-731 / CDC346-86 / RSK2980)</name>
    <dbReference type="NCBI Taxonomy" id="41514"/>
    <lineage>
        <taxon>Bacteria</taxon>
        <taxon>Pseudomonadati</taxon>
        <taxon>Pseudomonadota</taxon>
        <taxon>Gammaproteobacteria</taxon>
        <taxon>Enterobacterales</taxon>
        <taxon>Enterobacteriaceae</taxon>
        <taxon>Salmonella</taxon>
    </lineage>
</organism>
<feature type="signal peptide" evidence="1">
    <location>
        <begin position="1"/>
        <end position="20"/>
    </location>
</feature>
<feature type="chain" id="PRO_1000087432" description="Outer membrane protein assembly factor BamA">
    <location>
        <begin position="21"/>
        <end position="810"/>
    </location>
</feature>
<feature type="domain" description="POTRA 1" evidence="2">
    <location>
        <begin position="24"/>
        <end position="91"/>
    </location>
</feature>
<feature type="domain" description="POTRA 2" evidence="2">
    <location>
        <begin position="92"/>
        <end position="172"/>
    </location>
</feature>
<feature type="domain" description="POTRA 3" evidence="2">
    <location>
        <begin position="175"/>
        <end position="263"/>
    </location>
</feature>
<feature type="domain" description="POTRA 4" evidence="2">
    <location>
        <begin position="266"/>
        <end position="344"/>
    </location>
</feature>
<feature type="domain" description="POTRA 5" evidence="2">
    <location>
        <begin position="347"/>
        <end position="421"/>
    </location>
</feature>
<dbReference type="EMBL" id="CP000880">
    <property type="protein sequence ID" value="ABX22627.1"/>
    <property type="molecule type" value="Genomic_DNA"/>
</dbReference>
<dbReference type="BMRB" id="A9MPI4"/>
<dbReference type="SMR" id="A9MPI4"/>
<dbReference type="STRING" id="41514.SARI_02778"/>
<dbReference type="KEGG" id="ses:SARI_02778"/>
<dbReference type="HOGENOM" id="CLU_007664_1_0_6"/>
<dbReference type="Proteomes" id="UP000002084">
    <property type="component" value="Chromosome"/>
</dbReference>
<dbReference type="GO" id="GO:1990063">
    <property type="term" value="C:Bam protein complex"/>
    <property type="evidence" value="ECO:0007669"/>
    <property type="project" value="TreeGrafter"/>
</dbReference>
<dbReference type="GO" id="GO:0043165">
    <property type="term" value="P:Gram-negative-bacterium-type cell outer membrane assembly"/>
    <property type="evidence" value="ECO:0007669"/>
    <property type="project" value="UniProtKB-UniRule"/>
</dbReference>
<dbReference type="GO" id="GO:0051205">
    <property type="term" value="P:protein insertion into membrane"/>
    <property type="evidence" value="ECO:0007669"/>
    <property type="project" value="UniProtKB-UniRule"/>
</dbReference>
<dbReference type="FunFam" id="2.40.160.50:FF:000001">
    <property type="entry name" value="Outer membrane protein assembly factor BamA"/>
    <property type="match status" value="1"/>
</dbReference>
<dbReference type="FunFam" id="3.10.20.310:FF:000001">
    <property type="entry name" value="Outer membrane protein assembly factor BamA"/>
    <property type="match status" value="1"/>
</dbReference>
<dbReference type="FunFam" id="3.10.20.310:FF:000002">
    <property type="entry name" value="Outer membrane protein assembly factor BamA"/>
    <property type="match status" value="1"/>
</dbReference>
<dbReference type="FunFam" id="3.10.20.310:FF:000003">
    <property type="entry name" value="Outer membrane protein assembly factor BamA"/>
    <property type="match status" value="1"/>
</dbReference>
<dbReference type="FunFam" id="3.10.20.310:FF:000004">
    <property type="entry name" value="Outer membrane protein assembly factor BamA"/>
    <property type="match status" value="1"/>
</dbReference>
<dbReference type="FunFam" id="3.10.20.310:FF:000005">
    <property type="entry name" value="Outer membrane protein assembly factor BamA"/>
    <property type="match status" value="1"/>
</dbReference>
<dbReference type="Gene3D" id="3.10.20.310">
    <property type="entry name" value="membrane protein fhac"/>
    <property type="match status" value="5"/>
</dbReference>
<dbReference type="Gene3D" id="2.40.160.50">
    <property type="entry name" value="membrane protein fhac: a member of the omp85/tpsb transporter family"/>
    <property type="match status" value="1"/>
</dbReference>
<dbReference type="HAMAP" id="MF_01430">
    <property type="entry name" value="OM_assembly_BamA"/>
    <property type="match status" value="1"/>
</dbReference>
<dbReference type="InterPro" id="IPR000184">
    <property type="entry name" value="Bac_surfAg_D15"/>
</dbReference>
<dbReference type="InterPro" id="IPR010827">
    <property type="entry name" value="BamA/TamA_POTRA"/>
</dbReference>
<dbReference type="InterPro" id="IPR039910">
    <property type="entry name" value="D15-like"/>
</dbReference>
<dbReference type="InterPro" id="IPR023707">
    <property type="entry name" value="OM_assembly_BamA"/>
</dbReference>
<dbReference type="InterPro" id="IPR034746">
    <property type="entry name" value="POTRA"/>
</dbReference>
<dbReference type="NCBIfam" id="TIGR03303">
    <property type="entry name" value="OM_YaeT"/>
    <property type="match status" value="1"/>
</dbReference>
<dbReference type="NCBIfam" id="NF008287">
    <property type="entry name" value="PRK11067.1"/>
    <property type="match status" value="1"/>
</dbReference>
<dbReference type="PANTHER" id="PTHR12815:SF23">
    <property type="entry name" value="OUTER MEMBRANE PROTEIN ASSEMBLY FACTOR BAMA"/>
    <property type="match status" value="1"/>
</dbReference>
<dbReference type="PANTHER" id="PTHR12815">
    <property type="entry name" value="SORTING AND ASSEMBLY MACHINERY SAMM50 PROTEIN FAMILY MEMBER"/>
    <property type="match status" value="1"/>
</dbReference>
<dbReference type="Pfam" id="PF01103">
    <property type="entry name" value="Omp85"/>
    <property type="match status" value="1"/>
</dbReference>
<dbReference type="Pfam" id="PF07244">
    <property type="entry name" value="POTRA"/>
    <property type="match status" value="4"/>
</dbReference>
<dbReference type="PIRSF" id="PIRSF006076">
    <property type="entry name" value="OM_assembly_OMP85"/>
    <property type="match status" value="1"/>
</dbReference>
<dbReference type="PROSITE" id="PS51779">
    <property type="entry name" value="POTRA"/>
    <property type="match status" value="5"/>
</dbReference>
<comment type="function">
    <text evidence="1">Part of the outer membrane protein assembly complex, which is involved in assembly and insertion of beta-barrel proteins into the outer membrane. Constitutes, with BamD, the core component of the assembly machinery.</text>
</comment>
<comment type="subunit">
    <text evidence="1">Part of the Bam complex, which is composed of the outer membrane protein BamA, and four lipoproteins BamB, BamC, BamD and BamE.</text>
</comment>
<comment type="subcellular location">
    <subcellularLocation>
        <location evidence="1">Cell outer membrane</location>
    </subcellularLocation>
</comment>
<comment type="similarity">
    <text evidence="1">Belongs to the BamA family.</text>
</comment>
<accession>A9MPI4</accession>
<keyword id="KW-0998">Cell outer membrane</keyword>
<keyword id="KW-0472">Membrane</keyword>
<keyword id="KW-1185">Reference proteome</keyword>
<keyword id="KW-0677">Repeat</keyword>
<keyword id="KW-0732">Signal</keyword>
<keyword id="KW-0812">Transmembrane</keyword>
<keyword id="KW-1134">Transmembrane beta strand</keyword>
<evidence type="ECO:0000255" key="1">
    <source>
        <dbReference type="HAMAP-Rule" id="MF_01430"/>
    </source>
</evidence>
<evidence type="ECO:0000255" key="2">
    <source>
        <dbReference type="PROSITE-ProRule" id="PRU01115"/>
    </source>
</evidence>
<protein>
    <recommendedName>
        <fullName evidence="1">Outer membrane protein assembly factor BamA</fullName>
    </recommendedName>
</protein>
<name>BAMA_SALAR</name>
<sequence>MAMKKLLIASLLFSSATVYGAEGFVVKDIHFEGLQRVAVGAALLSMPVRTGDTVNDEDISNTIRALFATGNFEDVRVLRDGDTLLVQVKERPTIASITFSGNKSVKDDMLKQNLEASGVRVGESLDRTTLSDIEKGLEDFYYSVGKYSASVKAVVTPLPRNRVDLKLVFQEGVSAKIQQINIVGNHAFSTEELISHFQLRDEVPWWNVVGDRKYQKQKLAGDLETLRSYYLDRGYARFNIDSTQVSLTPDKKGIYITVNITEGDQYKLSGVEVSGNLAGHSAEIENLTKIEPGELYNGTKVTKMEDDIKKLLGRYGYAYPRVQSQPEINDADKTVKLRVNVDAGNRFYVRKIRFEGNDTSKDSVLRREMRQMEGAWLGSDLVDQGKERLNRLGYFETVDTDTQRVPGSPDQVDVVYKVKERNTGSFNFGIGYGTESGVSFQAGVQQDNWLGTGYSVGINGTKNDYQTYSELSVTNPYFTVDGVSLGGRIFYNDFQADDADLSDYTNKSYGSDVTLGFPINEYNTLRAGVGYVHNSLSNMEPQVAMWRYLYSMGEHPNTDDQNNSFKTDDFTFNYGWTYNKLDRGFFPTEGTRINLNGKVTIPGSDNEYYKATLDTATYVPIDDDHKWVILGRTRFGYGDGFGGKEMPFYENFYAGGSSTVRGFQSNTIGPKAVYFPHAASNYDPDDDYECATQDGAKDMCKSDDAVGGNAMAVASLEFITPTPFISEKYANSVRTSFFWDMGTVWDTNWDSSQYSGYPDYSDPSNIRMSAGIALQWMSPLGPLVFSYAQPFKKYDGDKAEQFQFNIGKTW</sequence>